<dbReference type="EMBL" id="CP000727">
    <property type="protein sequence ID" value="ABS37955.1"/>
    <property type="molecule type" value="Genomic_DNA"/>
</dbReference>
<dbReference type="EMBL" id="AM412317">
    <property type="protein sequence ID" value="CAL82785.1"/>
    <property type="molecule type" value="Genomic_DNA"/>
</dbReference>
<dbReference type="RefSeq" id="WP_003400937.1">
    <property type="nucleotide sequence ID" value="NC_009698.1"/>
</dbReference>
<dbReference type="RefSeq" id="YP_001253760.1">
    <property type="nucleotide sequence ID" value="NC_009495.1"/>
</dbReference>
<dbReference type="RefSeq" id="YP_001387143.1">
    <property type="nucleotide sequence ID" value="NC_009698.1"/>
</dbReference>
<dbReference type="SMR" id="A5I174"/>
<dbReference type="GeneID" id="5185491"/>
<dbReference type="KEGG" id="cbh:CLC_1277"/>
<dbReference type="KEGG" id="cbo:CBO1236"/>
<dbReference type="PATRIC" id="fig|413999.7.peg.1224"/>
<dbReference type="HOGENOM" id="CLU_191960_1_0_9"/>
<dbReference type="PRO" id="PR:A5I174"/>
<dbReference type="Proteomes" id="UP000001986">
    <property type="component" value="Chromosome"/>
</dbReference>
<dbReference type="GO" id="GO:0042601">
    <property type="term" value="C:endospore-forming forespore"/>
    <property type="evidence" value="ECO:0007669"/>
    <property type="project" value="InterPro"/>
</dbReference>
<dbReference type="GO" id="GO:0030436">
    <property type="term" value="P:asexual sporulation"/>
    <property type="evidence" value="ECO:0007669"/>
    <property type="project" value="UniProtKB-UniRule"/>
</dbReference>
<dbReference type="GO" id="GO:0030435">
    <property type="term" value="P:sporulation resulting in formation of a cellular spore"/>
    <property type="evidence" value="ECO:0007669"/>
    <property type="project" value="UniProtKB-KW"/>
</dbReference>
<dbReference type="HAMAP" id="MF_00667">
    <property type="entry name" value="SspH"/>
    <property type="match status" value="1"/>
</dbReference>
<dbReference type="InterPro" id="IPR012610">
    <property type="entry name" value="SASP_SspH"/>
</dbReference>
<dbReference type="NCBIfam" id="TIGR02861">
    <property type="entry name" value="SASP_H"/>
    <property type="match status" value="1"/>
</dbReference>
<dbReference type="Pfam" id="PF08141">
    <property type="entry name" value="SspH"/>
    <property type="match status" value="1"/>
</dbReference>
<proteinExistence type="inferred from homology"/>
<reference key="1">
    <citation type="journal article" date="2007" name="Genome Res.">
        <title>Genome sequence of a proteolytic (Group I) Clostridium botulinum strain Hall A and comparative analysis of the clostridial genomes.</title>
        <authorList>
            <person name="Sebaihia M."/>
            <person name="Peck M.W."/>
            <person name="Minton N.P."/>
            <person name="Thomson N.R."/>
            <person name="Holden M.T.G."/>
            <person name="Mitchell W.J."/>
            <person name="Carter A.T."/>
            <person name="Bentley S.D."/>
            <person name="Mason D.R."/>
            <person name="Crossman L."/>
            <person name="Paul C.J."/>
            <person name="Ivens A."/>
            <person name="Wells-Bennik M.H.J."/>
            <person name="Davis I.J."/>
            <person name="Cerdeno-Tarraga A.M."/>
            <person name="Churcher C."/>
            <person name="Quail M.A."/>
            <person name="Chillingworth T."/>
            <person name="Feltwell T."/>
            <person name="Fraser A."/>
            <person name="Goodhead I."/>
            <person name="Hance Z."/>
            <person name="Jagels K."/>
            <person name="Larke N."/>
            <person name="Maddison M."/>
            <person name="Moule S."/>
            <person name="Mungall K."/>
            <person name="Norbertczak H."/>
            <person name="Rabbinowitsch E."/>
            <person name="Sanders M."/>
            <person name="Simmonds M."/>
            <person name="White B."/>
            <person name="Whithead S."/>
            <person name="Parkhill J."/>
        </authorList>
    </citation>
    <scope>NUCLEOTIDE SEQUENCE [LARGE SCALE GENOMIC DNA]</scope>
    <source>
        <strain>Hall / ATCC 3502 / NCTC 13319 / Type A</strain>
    </source>
</reference>
<reference key="2">
    <citation type="journal article" date="2007" name="PLoS ONE">
        <title>Analysis of the neurotoxin complex genes in Clostridium botulinum A1-A4 and B1 strains: BoNT/A3, /Ba4 and /B1 clusters are located within plasmids.</title>
        <authorList>
            <person name="Smith T.J."/>
            <person name="Hill K.K."/>
            <person name="Foley B.T."/>
            <person name="Detter J.C."/>
            <person name="Munk A.C."/>
            <person name="Bruce D.C."/>
            <person name="Doggett N.A."/>
            <person name="Smith L.A."/>
            <person name="Marks J.D."/>
            <person name="Xie G."/>
            <person name="Brettin T.S."/>
        </authorList>
    </citation>
    <scope>NUCLEOTIDE SEQUENCE [LARGE SCALE GENOMIC DNA]</scope>
    <source>
        <strain>Hall / ATCC 3502 / NCTC 13319 / Type A</strain>
    </source>
</reference>
<name>SSPH2_CLOBH</name>
<accession>A5I174</accession>
<accession>A7G2X8</accession>
<sequence>MKSERAKQIIDSKKYIPVYYKNTPVHIEKVDNKENIAHIKSLNTDKEIVVNVKTLSECNKLNN</sequence>
<comment type="subcellular location">
    <subcellularLocation>
        <location evidence="1">Spore core</location>
    </subcellularLocation>
</comment>
<comment type="similarity">
    <text evidence="1">Belongs to the SspH family.</text>
</comment>
<feature type="chain" id="PRO_0000329129" description="Small, acid-soluble spore protein H 2">
    <location>
        <begin position="1"/>
        <end position="63"/>
    </location>
</feature>
<gene>
    <name evidence="1" type="primary">sspH2</name>
    <name type="ordered locus">CBO1236</name>
    <name type="ordered locus">CLC_1277</name>
</gene>
<evidence type="ECO:0000255" key="1">
    <source>
        <dbReference type="HAMAP-Rule" id="MF_00667"/>
    </source>
</evidence>
<protein>
    <recommendedName>
        <fullName evidence="1">Small, acid-soluble spore protein H 2</fullName>
        <shortName evidence="1">SASP H 2</shortName>
    </recommendedName>
</protein>
<keyword id="KW-1185">Reference proteome</keyword>
<keyword id="KW-0749">Sporulation</keyword>
<organism>
    <name type="scientific">Clostridium botulinum (strain Hall / ATCC 3502 / NCTC 13319 / Type A)</name>
    <dbReference type="NCBI Taxonomy" id="441771"/>
    <lineage>
        <taxon>Bacteria</taxon>
        <taxon>Bacillati</taxon>
        <taxon>Bacillota</taxon>
        <taxon>Clostridia</taxon>
        <taxon>Eubacteriales</taxon>
        <taxon>Clostridiaceae</taxon>
        <taxon>Clostridium</taxon>
    </lineage>
</organism>